<name>BCUSY_MAGGA</name>
<comment type="function">
    <text evidence="2">Sesquiterpene synthase converting farnesyl diphosphate into beta-cubebene (24.5%), alpha-muurolene (19.3%), delta-cadinol (18.6%), delta-elemene (16.0%), tau-muurolene (10.8%), and beta-elemene (10.8%). No activity with geranyl diphosphate or geranylgeranyl diphosphate.</text>
</comment>
<comment type="catalytic activity">
    <reaction evidence="2">
        <text>(2E,6E)-farnesyl diphosphate = beta-cubebene + diphosphate</text>
        <dbReference type="Rhea" id="RHEA:32019"/>
        <dbReference type="ChEBI" id="CHEBI:10363"/>
        <dbReference type="ChEBI" id="CHEBI:33019"/>
        <dbReference type="ChEBI" id="CHEBI:175763"/>
        <dbReference type="EC" id="4.2.3.128"/>
    </reaction>
</comment>
<comment type="cofactor">
    <cofactor evidence="4">
        <name>Mg(2+)</name>
        <dbReference type="ChEBI" id="CHEBI:18420"/>
    </cofactor>
    <text evidence="4">Binds 3 Mg(2+) ions per subunit.</text>
</comment>
<comment type="biophysicochemical properties">
    <kinetics>
        <KM evidence="2">1.07 uM for farnesyl diphosphate</KM>
        <text>kcat is 0.35 x 10(-3) sec(-1) for farnesyl diphosphate.</text>
    </kinetics>
    <phDependence>
        <text evidence="2">Optimum pH is 7.5.</text>
    </phDependence>
    <temperatureDependence>
        <text evidence="2">Optimum temperature is 24-26 degrees Celsius.</text>
    </temperatureDependence>
</comment>
<comment type="pathway">
    <text>Secondary metabolite biosynthesis; terpenoid biosynthesis.</text>
</comment>
<comment type="tissue specificity">
    <text evidence="2">Expressed in young developing leaves and in stamens. Not detected in tepals and carpels.</text>
</comment>
<comment type="domain">
    <text evidence="1">The Asp-Asp-Xaa-Xaa-Asp/Glu (DDXXD/E) motif is important for the catalytic activity, presumably through binding to Mg(2+).</text>
</comment>
<comment type="similarity">
    <text evidence="3">Belongs to the terpene synthase family. Tpsa subfamily.</text>
</comment>
<feature type="chain" id="PRO_0000419800" description="Beta-cubebene synthase">
    <location>
        <begin position="1"/>
        <end position="550"/>
    </location>
</feature>
<feature type="short sequence motif" description="DDXXD motif">
    <location>
        <begin position="303"/>
        <end position="307"/>
    </location>
</feature>
<feature type="binding site" evidence="1">
    <location>
        <position position="303"/>
    </location>
    <ligand>
        <name>Mg(2+)</name>
        <dbReference type="ChEBI" id="CHEBI:18420"/>
        <label>1</label>
    </ligand>
</feature>
<feature type="binding site" evidence="1">
    <location>
        <position position="303"/>
    </location>
    <ligand>
        <name>Mg(2+)</name>
        <dbReference type="ChEBI" id="CHEBI:18420"/>
        <label>2</label>
    </ligand>
</feature>
<feature type="binding site" evidence="1">
    <location>
        <position position="307"/>
    </location>
    <ligand>
        <name>Mg(2+)</name>
        <dbReference type="ChEBI" id="CHEBI:18420"/>
        <label>1</label>
    </ligand>
</feature>
<feature type="binding site" evidence="1">
    <location>
        <position position="307"/>
    </location>
    <ligand>
        <name>Mg(2+)</name>
        <dbReference type="ChEBI" id="CHEBI:18420"/>
        <label>2</label>
    </ligand>
</feature>
<feature type="binding site" evidence="1">
    <location>
        <position position="447"/>
    </location>
    <ligand>
        <name>Mg(2+)</name>
        <dbReference type="ChEBI" id="CHEBI:18420"/>
        <label>3</label>
    </ligand>
</feature>
<feature type="binding site" evidence="1">
    <location>
        <position position="455"/>
    </location>
    <ligand>
        <name>Mg(2+)</name>
        <dbReference type="ChEBI" id="CHEBI:18420"/>
        <label>3</label>
    </ligand>
</feature>
<evidence type="ECO:0000250" key="1"/>
<evidence type="ECO:0000269" key="2">
    <source>
    </source>
</evidence>
<evidence type="ECO:0000305" key="3"/>
<evidence type="ECO:0000305" key="4">
    <source>
    </source>
</evidence>
<keyword id="KW-0456">Lyase</keyword>
<keyword id="KW-0460">Magnesium</keyword>
<keyword id="KW-0479">Metal-binding</keyword>
<protein>
    <recommendedName>
        <fullName>Beta-cubebene synthase</fullName>
        <shortName>Mg25</shortName>
        <ecNumber>4.2.3.128</ecNumber>
    </recommendedName>
</protein>
<reference key="1">
    <citation type="journal article" date="2008" name="Plant Physiol.">
        <title>Biochemical and genomic characterization of terpene synthases in Magnolia grandiflora.</title>
        <authorList>
            <person name="Lee S."/>
            <person name="Chappell J."/>
        </authorList>
    </citation>
    <scope>NUCLEOTIDE SEQUENCE [MRNA]</scope>
    <scope>FUNCTION</scope>
    <scope>CATALYTIC ACTIVITY</scope>
    <scope>BIOPHYSICOCHEMICAL PROPERTIES</scope>
    <scope>COFACTOR</scope>
    <scope>TISSUE SPECIFICITY</scope>
</reference>
<dbReference type="EC" id="4.2.3.128"/>
<dbReference type="EMBL" id="EU366429">
    <property type="protein sequence ID" value="ACC66281.1"/>
    <property type="molecule type" value="Genomic_DNA"/>
</dbReference>
<dbReference type="SMR" id="B3TPQ6"/>
<dbReference type="KEGG" id="ag:ACC66281"/>
<dbReference type="BioCyc" id="MetaCyc:MONOMER-14947"/>
<dbReference type="BRENDA" id="4.2.3.128">
    <property type="organism ID" value="13170"/>
</dbReference>
<dbReference type="SABIO-RK" id="B3TPQ6"/>
<dbReference type="UniPathway" id="UPA00213"/>
<dbReference type="GO" id="GO:0000287">
    <property type="term" value="F:magnesium ion binding"/>
    <property type="evidence" value="ECO:0007669"/>
    <property type="project" value="InterPro"/>
</dbReference>
<dbReference type="GO" id="GO:0010334">
    <property type="term" value="F:sesquiterpene synthase activity"/>
    <property type="evidence" value="ECO:0000314"/>
    <property type="project" value="UniProtKB"/>
</dbReference>
<dbReference type="GO" id="GO:0016102">
    <property type="term" value="P:diterpenoid biosynthetic process"/>
    <property type="evidence" value="ECO:0007669"/>
    <property type="project" value="InterPro"/>
</dbReference>
<dbReference type="GO" id="GO:0045338">
    <property type="term" value="P:farnesyl diphosphate metabolic process"/>
    <property type="evidence" value="ECO:0000314"/>
    <property type="project" value="UniProtKB"/>
</dbReference>
<dbReference type="GO" id="GO:0051762">
    <property type="term" value="P:sesquiterpene biosynthetic process"/>
    <property type="evidence" value="ECO:0000314"/>
    <property type="project" value="UniProtKB"/>
</dbReference>
<dbReference type="CDD" id="cd00684">
    <property type="entry name" value="Terpene_cyclase_plant_C1"/>
    <property type="match status" value="1"/>
</dbReference>
<dbReference type="FunFam" id="1.10.600.10:FF:000007">
    <property type="entry name" value="Isoprene synthase, chloroplastic"/>
    <property type="match status" value="1"/>
</dbReference>
<dbReference type="FunFam" id="1.50.10.130:FF:000001">
    <property type="entry name" value="Isoprene synthase, chloroplastic"/>
    <property type="match status" value="1"/>
</dbReference>
<dbReference type="Gene3D" id="1.10.600.10">
    <property type="entry name" value="Farnesyl Diphosphate Synthase"/>
    <property type="match status" value="1"/>
</dbReference>
<dbReference type="Gene3D" id="1.50.10.130">
    <property type="entry name" value="Terpene synthase, N-terminal domain"/>
    <property type="match status" value="1"/>
</dbReference>
<dbReference type="InterPro" id="IPR008949">
    <property type="entry name" value="Isoprenoid_synthase_dom_sf"/>
</dbReference>
<dbReference type="InterPro" id="IPR034741">
    <property type="entry name" value="Terpene_cyclase-like_1_C"/>
</dbReference>
<dbReference type="InterPro" id="IPR044814">
    <property type="entry name" value="Terpene_cyclase_plant_C1"/>
</dbReference>
<dbReference type="InterPro" id="IPR001906">
    <property type="entry name" value="Terpene_synth_N"/>
</dbReference>
<dbReference type="InterPro" id="IPR036965">
    <property type="entry name" value="Terpene_synth_N_sf"/>
</dbReference>
<dbReference type="InterPro" id="IPR050148">
    <property type="entry name" value="Terpene_synthase-like"/>
</dbReference>
<dbReference type="InterPro" id="IPR005630">
    <property type="entry name" value="Terpene_synthase_metal-bd"/>
</dbReference>
<dbReference type="InterPro" id="IPR008930">
    <property type="entry name" value="Terpenoid_cyclase/PrenylTrfase"/>
</dbReference>
<dbReference type="PANTHER" id="PTHR31225:SF93">
    <property type="entry name" value="ALPHA-HUMULENE_(-)-(E)-BETA-CARYOPHYLLENE SYNTHASE"/>
    <property type="match status" value="1"/>
</dbReference>
<dbReference type="PANTHER" id="PTHR31225">
    <property type="entry name" value="OS04G0344100 PROTEIN-RELATED"/>
    <property type="match status" value="1"/>
</dbReference>
<dbReference type="Pfam" id="PF01397">
    <property type="entry name" value="Terpene_synth"/>
    <property type="match status" value="1"/>
</dbReference>
<dbReference type="Pfam" id="PF03936">
    <property type="entry name" value="Terpene_synth_C"/>
    <property type="match status" value="1"/>
</dbReference>
<dbReference type="SFLD" id="SFLDS00005">
    <property type="entry name" value="Isoprenoid_Synthase_Type_I"/>
    <property type="match status" value="1"/>
</dbReference>
<dbReference type="SFLD" id="SFLDG01019">
    <property type="entry name" value="Terpene_Cyclase_Like_1_C_Termi"/>
    <property type="match status" value="1"/>
</dbReference>
<dbReference type="SUPFAM" id="SSF48239">
    <property type="entry name" value="Terpenoid cyclases/Protein prenyltransferases"/>
    <property type="match status" value="1"/>
</dbReference>
<dbReference type="SUPFAM" id="SSF48576">
    <property type="entry name" value="Terpenoid synthases"/>
    <property type="match status" value="1"/>
</dbReference>
<proteinExistence type="evidence at protein level"/>
<accession>B3TPQ6</accession>
<sequence>MDSPTTQRPNMEIGRAFVNYHPSIWGEHFIAASPDVMRLDAHKGRGEELKEVVRNMFSTVNDPLLKMNLIDAIQRLGVAYHFEMEIDKALGQMYDDHINGKDDGFDLQTLALQFRLLRQQGYNVSSGVFAKFKDDEGNFSSILSKDTHGLLSLYEAAFLGTHGDDILDEAITFTTVHLKSTLPHVSAPLTKLVELALEIPLHRRMERLQTRFYISIYEEDRERNDVLLEFSKLEFLRLQSLHQRELRDISLWWKEMDLLAKLPFTRDRVLEGYFWTVGVYFEPHYSRARMIMTKMIAFATVMDDTYDVYGTLEELELLTATIERWNRGDMDQLPDYMKVIFIALLDGVDATEDDLTGEGKSYRIYYLKEAVKDLAKAYLAEARWVSSGYVPTSEEYMKVALISAVYPMLFVAFLIGMDEVVTKEVLEWAIHMPTMLRTCSIVARLMDDIPSNKLEQERKHVSSSVECYMKEHGTSYHESIQKLREMVASGWKDINKECLKPTPVPTAVINVILNFTRVLEIIYQHRDGYTDASVETKEHIASLFVDPIPL</sequence>
<organism>
    <name type="scientific">Magnolia grandiflora</name>
    <name type="common">Southern magnolia</name>
    <dbReference type="NCBI Taxonomy" id="3406"/>
    <lineage>
        <taxon>Eukaryota</taxon>
        <taxon>Viridiplantae</taxon>
        <taxon>Streptophyta</taxon>
        <taxon>Embryophyta</taxon>
        <taxon>Tracheophyta</taxon>
        <taxon>Spermatophyta</taxon>
        <taxon>Magnoliopsida</taxon>
        <taxon>Magnoliidae</taxon>
        <taxon>Magnoliales</taxon>
        <taxon>Magnoliaceae</taxon>
        <taxon>Magnolia</taxon>
    </lineage>
</organism>